<accession>A1V0B1</accession>
<evidence type="ECO:0000255" key="1">
    <source>
        <dbReference type="HAMAP-Rule" id="MF_00836"/>
    </source>
</evidence>
<reference key="1">
    <citation type="journal article" date="2010" name="Genome Biol. Evol.">
        <title>Continuing evolution of Burkholderia mallei through genome reduction and large-scale rearrangements.</title>
        <authorList>
            <person name="Losada L."/>
            <person name="Ronning C.M."/>
            <person name="DeShazer D."/>
            <person name="Woods D."/>
            <person name="Fedorova N."/>
            <person name="Kim H.S."/>
            <person name="Shabalina S.A."/>
            <person name="Pearson T.R."/>
            <person name="Brinkac L."/>
            <person name="Tan P."/>
            <person name="Nandi T."/>
            <person name="Crabtree J."/>
            <person name="Badger J."/>
            <person name="Beckstrom-Sternberg S."/>
            <person name="Saqib M."/>
            <person name="Schutzer S.E."/>
            <person name="Keim P."/>
            <person name="Nierman W.C."/>
        </authorList>
    </citation>
    <scope>NUCLEOTIDE SEQUENCE [LARGE SCALE GENOMIC DNA]</scope>
    <source>
        <strain>SAVP1</strain>
    </source>
</reference>
<dbReference type="EC" id="2.7.4.23" evidence="1"/>
<dbReference type="EMBL" id="CP000526">
    <property type="protein sequence ID" value="ABM52467.1"/>
    <property type="molecule type" value="Genomic_DNA"/>
</dbReference>
<dbReference type="RefSeq" id="WP_004194016.1">
    <property type="nucleotide sequence ID" value="NC_008785.1"/>
</dbReference>
<dbReference type="SMR" id="A1V0B1"/>
<dbReference type="GeneID" id="92980093"/>
<dbReference type="KEGG" id="bmv:BMASAVP1_A0313"/>
<dbReference type="HOGENOM" id="CLU_102477_0_0_4"/>
<dbReference type="UniPathway" id="UPA00087">
    <property type="reaction ID" value="UER00175"/>
</dbReference>
<dbReference type="GO" id="GO:0005524">
    <property type="term" value="F:ATP binding"/>
    <property type="evidence" value="ECO:0007669"/>
    <property type="project" value="UniProtKB-KW"/>
</dbReference>
<dbReference type="GO" id="GO:0033863">
    <property type="term" value="F:ribose 1,5-bisphosphate phosphokinase activity"/>
    <property type="evidence" value="ECO:0007669"/>
    <property type="project" value="UniProtKB-UniRule"/>
</dbReference>
<dbReference type="GO" id="GO:0006015">
    <property type="term" value="P:5-phosphoribose 1-diphosphate biosynthetic process"/>
    <property type="evidence" value="ECO:0007669"/>
    <property type="project" value="UniProtKB-UniRule"/>
</dbReference>
<dbReference type="GO" id="GO:0019634">
    <property type="term" value="P:organic phosphonate metabolic process"/>
    <property type="evidence" value="ECO:0007669"/>
    <property type="project" value="UniProtKB-UniRule"/>
</dbReference>
<dbReference type="Gene3D" id="3.40.50.300">
    <property type="entry name" value="P-loop containing nucleotide triphosphate hydrolases"/>
    <property type="match status" value="1"/>
</dbReference>
<dbReference type="HAMAP" id="MF_00836">
    <property type="entry name" value="PhnN"/>
    <property type="match status" value="1"/>
</dbReference>
<dbReference type="InterPro" id="IPR008145">
    <property type="entry name" value="GK/Ca_channel_bsu"/>
</dbReference>
<dbReference type="InterPro" id="IPR027417">
    <property type="entry name" value="P-loop_NTPase"/>
</dbReference>
<dbReference type="InterPro" id="IPR012699">
    <property type="entry name" value="PhnN"/>
</dbReference>
<dbReference type="NCBIfam" id="TIGR02322">
    <property type="entry name" value="phosphon_PhnN"/>
    <property type="match status" value="1"/>
</dbReference>
<dbReference type="NCBIfam" id="NF007485">
    <property type="entry name" value="PRK10078.1"/>
    <property type="match status" value="1"/>
</dbReference>
<dbReference type="Pfam" id="PF13238">
    <property type="entry name" value="AAA_18"/>
    <property type="match status" value="1"/>
</dbReference>
<dbReference type="SMART" id="SM00072">
    <property type="entry name" value="GuKc"/>
    <property type="match status" value="1"/>
</dbReference>
<dbReference type="SUPFAM" id="SSF52540">
    <property type="entry name" value="P-loop containing nucleoside triphosphate hydrolases"/>
    <property type="match status" value="1"/>
</dbReference>
<keyword id="KW-0067">ATP-binding</keyword>
<keyword id="KW-0547">Nucleotide-binding</keyword>
<keyword id="KW-0808">Transferase</keyword>
<comment type="function">
    <text evidence="1">Catalyzes the phosphorylation of ribose 1,5-bisphosphate to 5-phospho-D-ribosyl alpha-1-diphosphate (PRPP).</text>
</comment>
<comment type="catalytic activity">
    <reaction evidence="1">
        <text>alpha-D-ribose 1,5-bisphosphate + ATP = 5-phospho-alpha-D-ribose 1-diphosphate + ADP</text>
        <dbReference type="Rhea" id="RHEA:20109"/>
        <dbReference type="ChEBI" id="CHEBI:30616"/>
        <dbReference type="ChEBI" id="CHEBI:58017"/>
        <dbReference type="ChEBI" id="CHEBI:68688"/>
        <dbReference type="ChEBI" id="CHEBI:456216"/>
        <dbReference type="EC" id="2.7.4.23"/>
    </reaction>
</comment>
<comment type="pathway">
    <text evidence="1">Metabolic intermediate biosynthesis; 5-phospho-alpha-D-ribose 1-diphosphate biosynthesis; 5-phospho-alpha-D-ribose 1-diphosphate from D-ribose 5-phosphate (route II): step 3/3.</text>
</comment>
<comment type="similarity">
    <text evidence="1">Belongs to the ribose 1,5-bisphosphokinase family.</text>
</comment>
<sequence>MSAERLVYVMGPSGAGKDSLLAYARKHVREPRIAFAHRYITRKSDGHENHVELTRDEFAARAQLGFFALEWSSHGFRYGVGVEIDAWLAAGSVVVVSGSRAHLPAALERYPQMCVVHIDAAPHVLAERLATRGRETADEIRARLARSVRWAVPDGIALTAIDNSGTLDDAGRVLVALLEGLARS</sequence>
<name>PHNN_BURMS</name>
<organism>
    <name type="scientific">Burkholderia mallei (strain SAVP1)</name>
    <dbReference type="NCBI Taxonomy" id="320388"/>
    <lineage>
        <taxon>Bacteria</taxon>
        <taxon>Pseudomonadati</taxon>
        <taxon>Pseudomonadota</taxon>
        <taxon>Betaproteobacteria</taxon>
        <taxon>Burkholderiales</taxon>
        <taxon>Burkholderiaceae</taxon>
        <taxon>Burkholderia</taxon>
        <taxon>pseudomallei group</taxon>
    </lineage>
</organism>
<protein>
    <recommendedName>
        <fullName evidence="1">Ribose 1,5-bisphosphate phosphokinase PhnN</fullName>
        <ecNumber evidence="1">2.7.4.23</ecNumber>
    </recommendedName>
    <alternativeName>
        <fullName evidence="1">Ribose 1,5-bisphosphokinase</fullName>
    </alternativeName>
</protein>
<feature type="chain" id="PRO_0000412776" description="Ribose 1,5-bisphosphate phosphokinase PhnN">
    <location>
        <begin position="1"/>
        <end position="184"/>
    </location>
</feature>
<feature type="binding site" evidence="1">
    <location>
        <begin position="11"/>
        <end position="18"/>
    </location>
    <ligand>
        <name>ATP</name>
        <dbReference type="ChEBI" id="CHEBI:30616"/>
    </ligand>
</feature>
<proteinExistence type="inferred from homology"/>
<gene>
    <name evidence="1" type="primary">phnN</name>
    <name type="ordered locus">BMASAVP1_A0313</name>
</gene>